<feature type="transit peptide" description="Mitochondrion" evidence="3">
    <location>
        <begin position="1"/>
        <end position="56"/>
    </location>
</feature>
<feature type="chain" id="PRO_0000002571" description="ATP synthase lipid-binding protein, mitochondrial">
    <location>
        <begin position="57"/>
        <end position="131"/>
    </location>
</feature>
<feature type="transmembrane region" description="Helical" evidence="3">
    <location>
        <begin position="72"/>
        <end position="92"/>
    </location>
</feature>
<feature type="transmembrane region" description="Helical" evidence="3">
    <location>
        <begin position="107"/>
        <end position="127"/>
    </location>
</feature>
<feature type="site" description="Reversibly protonated during proton transport" evidence="1">
    <location>
        <position position="114"/>
    </location>
</feature>
<feature type="modified residue" description="N6,N6,N6-trimethyllysine" evidence="2">
    <location>
        <position position="99"/>
    </location>
</feature>
<dbReference type="EMBL" id="AF117583">
    <property type="protein sequence ID" value="AAF16705.1"/>
    <property type="molecule type" value="mRNA"/>
</dbReference>
<dbReference type="RefSeq" id="XP_030029870.1">
    <property type="nucleotide sequence ID" value="XM_030174010.2"/>
</dbReference>
<dbReference type="RefSeq" id="XP_030029877.1">
    <property type="nucleotide sequence ID" value="XM_030174017.2"/>
</dbReference>
<dbReference type="SMR" id="Q9U505"/>
<dbReference type="EnsemblMetazoa" id="XM_030174010.2">
    <property type="protein sequence ID" value="XP_030029870.1"/>
    <property type="gene ID" value="LOC115447084"/>
</dbReference>
<dbReference type="EnsemblMetazoa" id="XM_030174017.2">
    <property type="protein sequence ID" value="XP_030029877.1"/>
    <property type="gene ID" value="LOC115447084"/>
</dbReference>
<dbReference type="GeneID" id="115447084"/>
<dbReference type="OrthoDB" id="438052at2759"/>
<dbReference type="GO" id="GO:0031966">
    <property type="term" value="C:mitochondrial membrane"/>
    <property type="evidence" value="ECO:0007669"/>
    <property type="project" value="UniProtKB-SubCell"/>
</dbReference>
<dbReference type="GO" id="GO:0045259">
    <property type="term" value="C:proton-transporting ATP synthase complex"/>
    <property type="evidence" value="ECO:0007669"/>
    <property type="project" value="UniProtKB-KW"/>
</dbReference>
<dbReference type="GO" id="GO:0033177">
    <property type="term" value="C:proton-transporting two-sector ATPase complex, proton-transporting domain"/>
    <property type="evidence" value="ECO:0007669"/>
    <property type="project" value="InterPro"/>
</dbReference>
<dbReference type="GO" id="GO:0008289">
    <property type="term" value="F:lipid binding"/>
    <property type="evidence" value="ECO:0007669"/>
    <property type="project" value="UniProtKB-KW"/>
</dbReference>
<dbReference type="GO" id="GO:0015078">
    <property type="term" value="F:proton transmembrane transporter activity"/>
    <property type="evidence" value="ECO:0007669"/>
    <property type="project" value="InterPro"/>
</dbReference>
<dbReference type="GO" id="GO:0015986">
    <property type="term" value="P:proton motive force-driven ATP synthesis"/>
    <property type="evidence" value="ECO:0007669"/>
    <property type="project" value="InterPro"/>
</dbReference>
<dbReference type="CDD" id="cd18182">
    <property type="entry name" value="ATP-synt_Fo_c_ATP5G3"/>
    <property type="match status" value="1"/>
</dbReference>
<dbReference type="FunFam" id="1.20.20.10:FF:000003">
    <property type="entry name" value="Atp synthase f complex subunit mitochondrial"/>
    <property type="match status" value="1"/>
</dbReference>
<dbReference type="Gene3D" id="1.20.20.10">
    <property type="entry name" value="F1F0 ATP synthase subunit C"/>
    <property type="match status" value="1"/>
</dbReference>
<dbReference type="HAMAP" id="MF_01396">
    <property type="entry name" value="ATP_synth_c_bact"/>
    <property type="match status" value="1"/>
</dbReference>
<dbReference type="InterPro" id="IPR000454">
    <property type="entry name" value="ATP_synth_F0_csu"/>
</dbReference>
<dbReference type="InterPro" id="IPR020537">
    <property type="entry name" value="ATP_synth_F0_csu_DDCD_BS"/>
</dbReference>
<dbReference type="InterPro" id="IPR038662">
    <property type="entry name" value="ATP_synth_F0_csu_sf"/>
</dbReference>
<dbReference type="InterPro" id="IPR002379">
    <property type="entry name" value="ATPase_proteolipid_c-like_dom"/>
</dbReference>
<dbReference type="InterPro" id="IPR035921">
    <property type="entry name" value="F/V-ATP_Csub_sf"/>
</dbReference>
<dbReference type="PANTHER" id="PTHR10031">
    <property type="entry name" value="ATP SYNTHASE LIPID-BINDING PROTEIN, MITOCHONDRIAL"/>
    <property type="match status" value="1"/>
</dbReference>
<dbReference type="PANTHER" id="PTHR10031:SF0">
    <property type="entry name" value="ATPASE PROTEIN 9"/>
    <property type="match status" value="1"/>
</dbReference>
<dbReference type="Pfam" id="PF00137">
    <property type="entry name" value="ATP-synt_C"/>
    <property type="match status" value="1"/>
</dbReference>
<dbReference type="PRINTS" id="PR00124">
    <property type="entry name" value="ATPASEC"/>
</dbReference>
<dbReference type="SUPFAM" id="SSF81333">
    <property type="entry name" value="F1F0 ATP synthase subunit C"/>
    <property type="match status" value="1"/>
</dbReference>
<dbReference type="PROSITE" id="PS00605">
    <property type="entry name" value="ATPASE_C"/>
    <property type="match status" value="1"/>
</dbReference>
<evidence type="ECO:0000250" key="1"/>
<evidence type="ECO:0000250" key="2">
    <source>
        <dbReference type="UniProtKB" id="P05496"/>
    </source>
</evidence>
<evidence type="ECO:0000255" key="3"/>
<evidence type="ECO:0000305" key="4"/>
<organism>
    <name type="scientific">Manduca sexta</name>
    <name type="common">Tobacco hawkmoth</name>
    <name type="synonym">Tobacco hornworm</name>
    <dbReference type="NCBI Taxonomy" id="7130"/>
    <lineage>
        <taxon>Eukaryota</taxon>
        <taxon>Metazoa</taxon>
        <taxon>Ecdysozoa</taxon>
        <taxon>Arthropoda</taxon>
        <taxon>Hexapoda</taxon>
        <taxon>Insecta</taxon>
        <taxon>Pterygota</taxon>
        <taxon>Neoptera</taxon>
        <taxon>Endopterygota</taxon>
        <taxon>Lepidoptera</taxon>
        <taxon>Glossata</taxon>
        <taxon>Ditrysia</taxon>
        <taxon>Bombycoidea</taxon>
        <taxon>Sphingidae</taxon>
        <taxon>Sphinginae</taxon>
        <taxon>Sphingini</taxon>
        <taxon>Manduca</taxon>
    </lineage>
</organism>
<reference key="1">
    <citation type="journal article" date="1999" name="Insect Mol. Biol.">
        <title>Diversity of odourant binding proteins revealed by an expressed sequence tag project on male Manduca sexta moth antennae.</title>
        <authorList>
            <person name="Robertson H.M."/>
            <person name="Martos R."/>
            <person name="Sears C.R."/>
            <person name="Todres E.Z."/>
            <person name="Walden K.K.O."/>
            <person name="Nardi J.B."/>
        </authorList>
    </citation>
    <scope>NUCLEOTIDE SEQUENCE [MRNA]</scope>
    <source>
        <tissue>Antenna</tissue>
    </source>
</reference>
<keyword id="KW-0138">CF(0)</keyword>
<keyword id="KW-0375">Hydrogen ion transport</keyword>
<keyword id="KW-0406">Ion transport</keyword>
<keyword id="KW-0446">Lipid-binding</keyword>
<keyword id="KW-0472">Membrane</keyword>
<keyword id="KW-0488">Methylation</keyword>
<keyword id="KW-0496">Mitochondrion</keyword>
<keyword id="KW-0809">Transit peptide</keyword>
<keyword id="KW-0812">Transmembrane</keyword>
<keyword id="KW-1133">Transmembrane helix</keyword>
<keyword id="KW-0813">Transport</keyword>
<protein>
    <recommendedName>
        <fullName>ATP synthase lipid-binding protein, mitochondrial</fullName>
    </recommendedName>
    <alternativeName>
        <fullName>ATPase protein 9</fullName>
    </alternativeName>
    <alternativeName>
        <fullName>ATPase subunit c</fullName>
    </alternativeName>
</protein>
<sequence>MLSAARLIAPAARSAIFSNAAVVRPLAAVSTQTQLVPAAPAQLSAVRSFQTTSVTKDIDSAAKFIGAGAATVGVAGSGAGIGTVFGSLIIGYARNPSLKQQLFSYAILGFALSEAMGLFCLMMAFLLLFAF</sequence>
<name>AT5G_MANSE</name>
<comment type="function">
    <text evidence="1">Mitochondrial membrane ATP synthase (F(1)F(0) ATP synthase or Complex V) produces ATP from ADP in the presence of a proton gradient across the membrane which is generated by electron transport complexes of the respiratory chain. F-type ATPases consist of two structural domains, F(1) - containing the extramembraneous catalytic core and F(0) - containing the membrane proton channel, linked together by a central stalk and a peripheral stalk. During catalysis, ATP synthesis in the catalytic domain of F(1) is coupled via a rotary mechanism of the central stalk subunits to proton translocation. Part of the complex F(0) domain. A homomeric c-ring of probably 10 subunits is part of the complex rotary element (By similarity).</text>
</comment>
<comment type="subunit">
    <text>F-type ATPases have 2 components, CF(1) - the catalytic core - and CF(0) - the membrane proton channel. CF(1) has five subunits: alpha(3), beta(3), gamma(1), delta(1), epsilon(1). CF(0) has three main subunits: a, b and c.</text>
</comment>
<comment type="subcellular location">
    <subcellularLocation>
        <location evidence="1">Mitochondrion membrane</location>
        <topology evidence="1">Multi-pass membrane protein</topology>
    </subcellularLocation>
</comment>
<comment type="PTM">
    <text evidence="2">Trimethylated by ATPSCKMT at Lys-99. Methylation may be required for proper incorporation of the C subunit into the ATP synthase complex and mitochondrial respiration.</text>
</comment>
<comment type="similarity">
    <text evidence="4">Belongs to the ATPase C chain family.</text>
</comment>
<proteinExistence type="evidence at transcript level"/>
<accession>Q9U505</accession>